<sequence>MSALRHVVCALSGGVDSAVAALLLRRRGYQVTGVFMKNWDSLDEQGVCAADKDCEDAYKVCQILDIPFHQVSYVKEYWNDVFSDFLNEYEKGRTPNPDINCNKHIKFSCFYHYAVDNLGADAVATGHYARTSLEDEEVFEQKHTKKPDGLFRNRFEVRNPVKLLQAADSFKDQTFFLSQVSQDALRRTIFPLGELTKDFVKKIAAENSLHHVLQKRESMGICFIGKRNLEHFLLQYLQPRPGKFVSIEDNTVLGTHKGWFLYTLGQRAKISGLREPWYVVEKDGTKGDVLVAPRVDHPALYRDLLRTNRVHWIAEEPPAALVRDKMMECHFRFRHQMALVPCVLTLNQDGTVWVTAVKAVRGLALGQFAVFYKGEECLGSGKILRLGPSAYTLQKGKNRTRVAPEASSDSPGLHPTS</sequence>
<accession>Q9DAT5</accession>
<keyword id="KW-0067">ATP-binding</keyword>
<keyword id="KW-1015">Disulfide bond</keyword>
<keyword id="KW-0496">Mitochondrion</keyword>
<keyword id="KW-0547">Nucleotide-binding</keyword>
<keyword id="KW-1185">Reference proteome</keyword>
<keyword id="KW-0694">RNA-binding</keyword>
<keyword id="KW-0808">Transferase</keyword>
<keyword id="KW-0819">tRNA processing</keyword>
<keyword id="KW-0820">tRNA-binding</keyword>
<evidence type="ECO:0000250" key="1"/>
<evidence type="ECO:0000250" key="2">
    <source>
        <dbReference type="UniProtKB" id="O75648"/>
    </source>
</evidence>
<evidence type="ECO:0000250" key="3">
    <source>
        <dbReference type="UniProtKB" id="Q12093"/>
    </source>
</evidence>
<evidence type="ECO:0000256" key="4">
    <source>
        <dbReference type="SAM" id="MobiDB-lite"/>
    </source>
</evidence>
<evidence type="ECO:0000269" key="5">
    <source>
    </source>
</evidence>
<evidence type="ECO:0000305" key="6"/>
<evidence type="ECO:0000305" key="7">
    <source>
    </source>
</evidence>
<gene>
    <name type="primary">Trmu</name>
    <name type="synonym">Mtu1</name>
    <name type="synonym">Trmt1</name>
</gene>
<comment type="function">
    <text evidence="2">Catalyzes the 2-thiolation of uridine at the wobble position (U34) of mitochondrial tRNA(Lys), tRNA(Glu) and tRNA(Gln). Required for the formation of 5-taurinomethyl-2-thiouridine (tm5s2U) of mitochondrial tRNA(Lys), tRNA(Glu), and tRNA(Gln) at the wobble position. ATP is required to activate the C2 atom of the wobble base.</text>
</comment>
<comment type="catalytic activity">
    <reaction evidence="3">
        <text>5-taurinomethyluridine(34) in tRNA + S-sulfanyl-L-cysteinyl-[protein] + AH2 + ATP = 5-taurinomethyl-2-thiouridine(34) in tRNA + L-cysteinyl-[protein] + A + AMP + diphosphate + H(+)</text>
        <dbReference type="Rhea" id="RHEA:47040"/>
        <dbReference type="Rhea" id="RHEA-COMP:10131"/>
        <dbReference type="Rhea" id="RHEA-COMP:11726"/>
        <dbReference type="Rhea" id="RHEA-COMP:11732"/>
        <dbReference type="Rhea" id="RHEA-COMP:11733"/>
        <dbReference type="ChEBI" id="CHEBI:13193"/>
        <dbReference type="ChEBI" id="CHEBI:15378"/>
        <dbReference type="ChEBI" id="CHEBI:17499"/>
        <dbReference type="ChEBI" id="CHEBI:29950"/>
        <dbReference type="ChEBI" id="CHEBI:30616"/>
        <dbReference type="ChEBI" id="CHEBI:33019"/>
        <dbReference type="ChEBI" id="CHEBI:61963"/>
        <dbReference type="ChEBI" id="CHEBI:87171"/>
        <dbReference type="ChEBI" id="CHEBI:87172"/>
        <dbReference type="ChEBI" id="CHEBI:456215"/>
        <dbReference type="EC" id="2.8.1.14"/>
    </reaction>
</comment>
<comment type="subcellular location">
    <subcellularLocation>
        <location evidence="5">Mitochondrion</location>
    </subcellularLocation>
</comment>
<comment type="tissue specificity">
    <text evidence="5">Widely expressed but most abundant in tissues with high metabolic rate including heart, liver and brain. Expression is low in spleen, testis, lung and skeletal muscle. Also expressed in inner ear.</text>
</comment>
<comment type="miscellaneous">
    <text evidence="1">During the reaction, ATP is used to activate the C2 atom of U34 by adenylation. After this, the persulfide sulfur on the catalytic cysteine is transferred to the C2 atom of the wobble base (U34) of mitochondrial tRNA(Lys), tRNA(Glu) and tRNA(Gln). The reaction probably involves hydrogen sulfide that is generated from the persulfide intermediate and that acts as a nucleophile towards the activated C2 atom on U34. Subsequently, a transient disulfide bond is formed between the two active site cysteine residues (By similarity).</text>
</comment>
<comment type="similarity">
    <text evidence="6">Belongs to the MnmA/TRMU family.</text>
</comment>
<comment type="caution">
    <text evidence="7">Was originally thought to be a 5-methylaminomethyl-2-methyltransferase involved in tRNA modification.</text>
</comment>
<dbReference type="EC" id="2.8.1.14" evidence="3"/>
<dbReference type="EMBL" id="AY349617">
    <property type="protein sequence ID" value="AAQ55218.1"/>
    <property type="molecule type" value="mRNA"/>
</dbReference>
<dbReference type="EMBL" id="AK005541">
    <property type="protein sequence ID" value="BAB24110.1"/>
    <property type="molecule type" value="mRNA"/>
</dbReference>
<dbReference type="EMBL" id="AK043532">
    <property type="protein sequence ID" value="BAC31570.1"/>
    <property type="molecule type" value="mRNA"/>
</dbReference>
<dbReference type="EMBL" id="AK044059">
    <property type="protein sequence ID" value="BAC31758.1"/>
    <property type="molecule type" value="mRNA"/>
</dbReference>
<dbReference type="EMBL" id="BC061026">
    <property type="protein sequence ID" value="AAH61026.1"/>
    <property type="molecule type" value="mRNA"/>
</dbReference>
<dbReference type="CCDS" id="CCDS27726.1"/>
<dbReference type="RefSeq" id="NP_082339.1">
    <property type="nucleotide sequence ID" value="NM_028063.2"/>
</dbReference>
<dbReference type="SMR" id="Q9DAT5"/>
<dbReference type="FunCoup" id="Q9DAT5">
    <property type="interactions" value="1833"/>
</dbReference>
<dbReference type="STRING" id="10090.ENSMUSP00000023019"/>
<dbReference type="GlyGen" id="Q9DAT5">
    <property type="glycosylation" value="1 site, 1 O-linked glycan (1 site)"/>
</dbReference>
<dbReference type="iPTMnet" id="Q9DAT5"/>
<dbReference type="PhosphoSitePlus" id="Q9DAT5"/>
<dbReference type="SwissPalm" id="Q9DAT5"/>
<dbReference type="PaxDb" id="10090-ENSMUSP00000023019"/>
<dbReference type="PeptideAtlas" id="Q9DAT5"/>
<dbReference type="ProteomicsDB" id="290220"/>
<dbReference type="Pumba" id="Q9DAT5"/>
<dbReference type="Antibodypedia" id="28061">
    <property type="antibodies" value="190 antibodies from 18 providers"/>
</dbReference>
<dbReference type="Ensembl" id="ENSMUST00000023019.12">
    <property type="protein sequence ID" value="ENSMUSP00000023019.6"/>
    <property type="gene ID" value="ENSMUSG00000022386.13"/>
</dbReference>
<dbReference type="GeneID" id="72026"/>
<dbReference type="KEGG" id="mmu:72026"/>
<dbReference type="UCSC" id="uc007xdr.1">
    <property type="organism name" value="mouse"/>
</dbReference>
<dbReference type="AGR" id="MGI:1919276"/>
<dbReference type="CTD" id="55687"/>
<dbReference type="MGI" id="MGI:1919276">
    <property type="gene designation" value="Trmu"/>
</dbReference>
<dbReference type="VEuPathDB" id="HostDB:ENSMUSG00000022386"/>
<dbReference type="eggNOG" id="KOG2805">
    <property type="taxonomic scope" value="Eukaryota"/>
</dbReference>
<dbReference type="GeneTree" id="ENSGT00390000014323"/>
<dbReference type="HOGENOM" id="CLU_035188_1_1_1"/>
<dbReference type="InParanoid" id="Q9DAT5"/>
<dbReference type="OMA" id="PFYVWDL"/>
<dbReference type="OrthoDB" id="3685at2759"/>
<dbReference type="PhylomeDB" id="Q9DAT5"/>
<dbReference type="TreeFam" id="TF105611"/>
<dbReference type="BRENDA" id="2.1.1.61">
    <property type="organism ID" value="3474"/>
</dbReference>
<dbReference type="BioGRID-ORCS" id="72026">
    <property type="hits" value="25 hits in 79 CRISPR screens"/>
</dbReference>
<dbReference type="PRO" id="PR:Q9DAT5"/>
<dbReference type="Proteomes" id="UP000000589">
    <property type="component" value="Chromosome 15"/>
</dbReference>
<dbReference type="RNAct" id="Q9DAT5">
    <property type="molecule type" value="protein"/>
</dbReference>
<dbReference type="Bgee" id="ENSMUSG00000022386">
    <property type="expression patterns" value="Expressed in retinal neural layer and 226 other cell types or tissues"/>
</dbReference>
<dbReference type="ExpressionAtlas" id="Q9DAT5">
    <property type="expression patterns" value="baseline and differential"/>
</dbReference>
<dbReference type="GO" id="GO:0005739">
    <property type="term" value="C:mitochondrion"/>
    <property type="evidence" value="ECO:0000314"/>
    <property type="project" value="UniProtKB"/>
</dbReference>
<dbReference type="GO" id="GO:0005524">
    <property type="term" value="F:ATP binding"/>
    <property type="evidence" value="ECO:0007669"/>
    <property type="project" value="UniProtKB-KW"/>
</dbReference>
<dbReference type="GO" id="GO:0000049">
    <property type="term" value="F:tRNA binding"/>
    <property type="evidence" value="ECO:0007669"/>
    <property type="project" value="UniProtKB-KW"/>
</dbReference>
<dbReference type="GO" id="GO:0061708">
    <property type="term" value="F:tRNA-5-taurinomethyluridine 2-sulfurtransferase"/>
    <property type="evidence" value="ECO:0007669"/>
    <property type="project" value="UniProtKB-EC"/>
</dbReference>
<dbReference type="GO" id="GO:0008033">
    <property type="term" value="P:tRNA processing"/>
    <property type="evidence" value="ECO:0007669"/>
    <property type="project" value="UniProtKB-KW"/>
</dbReference>
<dbReference type="CDD" id="cd01998">
    <property type="entry name" value="MnmA_TRMU-like"/>
    <property type="match status" value="1"/>
</dbReference>
<dbReference type="FunFam" id="2.40.30.10:FF:000057">
    <property type="entry name" value="Mitochondrial tRNA-specific 2-thiouridylase 1"/>
    <property type="match status" value="1"/>
</dbReference>
<dbReference type="FunFam" id="3.40.50.620:FF:000104">
    <property type="entry name" value="Mitochondrial tRNA-specific 2-thiouridylase 1"/>
    <property type="match status" value="1"/>
</dbReference>
<dbReference type="FunFam" id="2.30.30.280:FF:000001">
    <property type="entry name" value="tRNA-specific 2-thiouridylase MnmA"/>
    <property type="match status" value="1"/>
</dbReference>
<dbReference type="Gene3D" id="2.30.30.280">
    <property type="entry name" value="Adenine nucleotide alpha hydrolases-like domains"/>
    <property type="match status" value="1"/>
</dbReference>
<dbReference type="Gene3D" id="3.40.50.620">
    <property type="entry name" value="HUPs"/>
    <property type="match status" value="1"/>
</dbReference>
<dbReference type="Gene3D" id="2.40.30.10">
    <property type="entry name" value="Translation factors"/>
    <property type="match status" value="1"/>
</dbReference>
<dbReference type="HAMAP" id="MF_00144">
    <property type="entry name" value="tRNA_thiouridyl_MnmA"/>
    <property type="match status" value="1"/>
</dbReference>
<dbReference type="InterPro" id="IPR004506">
    <property type="entry name" value="MnmA-like"/>
</dbReference>
<dbReference type="InterPro" id="IPR046885">
    <property type="entry name" value="MnmA-like_C"/>
</dbReference>
<dbReference type="InterPro" id="IPR046884">
    <property type="entry name" value="MnmA-like_central"/>
</dbReference>
<dbReference type="InterPro" id="IPR023382">
    <property type="entry name" value="MnmA-like_central_sf"/>
</dbReference>
<dbReference type="InterPro" id="IPR014729">
    <property type="entry name" value="Rossmann-like_a/b/a_fold"/>
</dbReference>
<dbReference type="NCBIfam" id="NF001138">
    <property type="entry name" value="PRK00143.1"/>
    <property type="match status" value="1"/>
</dbReference>
<dbReference type="NCBIfam" id="TIGR00420">
    <property type="entry name" value="trmU"/>
    <property type="match status" value="1"/>
</dbReference>
<dbReference type="PANTHER" id="PTHR11933:SF5">
    <property type="entry name" value="MITOCHONDRIAL TRNA-SPECIFIC 2-THIOURIDYLASE 1"/>
    <property type="match status" value="1"/>
</dbReference>
<dbReference type="PANTHER" id="PTHR11933">
    <property type="entry name" value="TRNA 5-METHYLAMINOMETHYL-2-THIOURIDYLATE -METHYLTRANSFERASE"/>
    <property type="match status" value="1"/>
</dbReference>
<dbReference type="Pfam" id="PF03054">
    <property type="entry name" value="tRNA_Me_trans"/>
    <property type="match status" value="1"/>
</dbReference>
<dbReference type="Pfam" id="PF20258">
    <property type="entry name" value="tRNA_Me_trans_C"/>
    <property type="match status" value="1"/>
</dbReference>
<dbReference type="Pfam" id="PF20259">
    <property type="entry name" value="tRNA_Me_trans_M"/>
    <property type="match status" value="1"/>
</dbReference>
<dbReference type="SUPFAM" id="SSF52402">
    <property type="entry name" value="Adenine nucleotide alpha hydrolases-like"/>
    <property type="match status" value="1"/>
</dbReference>
<organism>
    <name type="scientific">Mus musculus</name>
    <name type="common">Mouse</name>
    <dbReference type="NCBI Taxonomy" id="10090"/>
    <lineage>
        <taxon>Eukaryota</taxon>
        <taxon>Metazoa</taxon>
        <taxon>Chordata</taxon>
        <taxon>Craniata</taxon>
        <taxon>Vertebrata</taxon>
        <taxon>Euteleostomi</taxon>
        <taxon>Mammalia</taxon>
        <taxon>Eutheria</taxon>
        <taxon>Euarchontoglires</taxon>
        <taxon>Glires</taxon>
        <taxon>Rodentia</taxon>
        <taxon>Myomorpha</taxon>
        <taxon>Muroidea</taxon>
        <taxon>Muridae</taxon>
        <taxon>Murinae</taxon>
        <taxon>Mus</taxon>
        <taxon>Mus</taxon>
    </lineage>
</organism>
<reference key="1">
    <citation type="journal article" date="2004" name="Biochim. Biophys. Acta">
        <title>Identification and characterization of mouse TRMU gene encoding the mitochondrial 5-methylaminomethyl-2-thiouridylate-methyltransferase.</title>
        <authorList>
            <person name="Yan Q."/>
            <person name="Guan M.-X."/>
        </authorList>
    </citation>
    <scope>NUCLEOTIDE SEQUENCE [MRNA]</scope>
    <scope>SUBCELLULAR LOCATION</scope>
    <scope>TISSUE SPECIFICITY</scope>
</reference>
<reference key="2">
    <citation type="journal article" date="2005" name="Science">
        <title>The transcriptional landscape of the mammalian genome.</title>
        <authorList>
            <person name="Carninci P."/>
            <person name="Kasukawa T."/>
            <person name="Katayama S."/>
            <person name="Gough J."/>
            <person name="Frith M.C."/>
            <person name="Maeda N."/>
            <person name="Oyama R."/>
            <person name="Ravasi T."/>
            <person name="Lenhard B."/>
            <person name="Wells C."/>
            <person name="Kodzius R."/>
            <person name="Shimokawa K."/>
            <person name="Bajic V.B."/>
            <person name="Brenner S.E."/>
            <person name="Batalov S."/>
            <person name="Forrest A.R."/>
            <person name="Zavolan M."/>
            <person name="Davis M.J."/>
            <person name="Wilming L.G."/>
            <person name="Aidinis V."/>
            <person name="Allen J.E."/>
            <person name="Ambesi-Impiombato A."/>
            <person name="Apweiler R."/>
            <person name="Aturaliya R.N."/>
            <person name="Bailey T.L."/>
            <person name="Bansal M."/>
            <person name="Baxter L."/>
            <person name="Beisel K.W."/>
            <person name="Bersano T."/>
            <person name="Bono H."/>
            <person name="Chalk A.M."/>
            <person name="Chiu K.P."/>
            <person name="Choudhary V."/>
            <person name="Christoffels A."/>
            <person name="Clutterbuck D.R."/>
            <person name="Crowe M.L."/>
            <person name="Dalla E."/>
            <person name="Dalrymple B.P."/>
            <person name="de Bono B."/>
            <person name="Della Gatta G."/>
            <person name="di Bernardo D."/>
            <person name="Down T."/>
            <person name="Engstrom P."/>
            <person name="Fagiolini M."/>
            <person name="Faulkner G."/>
            <person name="Fletcher C.F."/>
            <person name="Fukushima T."/>
            <person name="Furuno M."/>
            <person name="Futaki S."/>
            <person name="Gariboldi M."/>
            <person name="Georgii-Hemming P."/>
            <person name="Gingeras T.R."/>
            <person name="Gojobori T."/>
            <person name="Green R.E."/>
            <person name="Gustincich S."/>
            <person name="Harbers M."/>
            <person name="Hayashi Y."/>
            <person name="Hensch T.K."/>
            <person name="Hirokawa N."/>
            <person name="Hill D."/>
            <person name="Huminiecki L."/>
            <person name="Iacono M."/>
            <person name="Ikeo K."/>
            <person name="Iwama A."/>
            <person name="Ishikawa T."/>
            <person name="Jakt M."/>
            <person name="Kanapin A."/>
            <person name="Katoh M."/>
            <person name="Kawasawa Y."/>
            <person name="Kelso J."/>
            <person name="Kitamura H."/>
            <person name="Kitano H."/>
            <person name="Kollias G."/>
            <person name="Krishnan S.P."/>
            <person name="Kruger A."/>
            <person name="Kummerfeld S.K."/>
            <person name="Kurochkin I.V."/>
            <person name="Lareau L.F."/>
            <person name="Lazarevic D."/>
            <person name="Lipovich L."/>
            <person name="Liu J."/>
            <person name="Liuni S."/>
            <person name="McWilliam S."/>
            <person name="Madan Babu M."/>
            <person name="Madera M."/>
            <person name="Marchionni L."/>
            <person name="Matsuda H."/>
            <person name="Matsuzawa S."/>
            <person name="Miki H."/>
            <person name="Mignone F."/>
            <person name="Miyake S."/>
            <person name="Morris K."/>
            <person name="Mottagui-Tabar S."/>
            <person name="Mulder N."/>
            <person name="Nakano N."/>
            <person name="Nakauchi H."/>
            <person name="Ng P."/>
            <person name="Nilsson R."/>
            <person name="Nishiguchi S."/>
            <person name="Nishikawa S."/>
            <person name="Nori F."/>
            <person name="Ohara O."/>
            <person name="Okazaki Y."/>
            <person name="Orlando V."/>
            <person name="Pang K.C."/>
            <person name="Pavan W.J."/>
            <person name="Pavesi G."/>
            <person name="Pesole G."/>
            <person name="Petrovsky N."/>
            <person name="Piazza S."/>
            <person name="Reed J."/>
            <person name="Reid J.F."/>
            <person name="Ring B.Z."/>
            <person name="Ringwald M."/>
            <person name="Rost B."/>
            <person name="Ruan Y."/>
            <person name="Salzberg S.L."/>
            <person name="Sandelin A."/>
            <person name="Schneider C."/>
            <person name="Schoenbach C."/>
            <person name="Sekiguchi K."/>
            <person name="Semple C.A."/>
            <person name="Seno S."/>
            <person name="Sessa L."/>
            <person name="Sheng Y."/>
            <person name="Shibata Y."/>
            <person name="Shimada H."/>
            <person name="Shimada K."/>
            <person name="Silva D."/>
            <person name="Sinclair B."/>
            <person name="Sperling S."/>
            <person name="Stupka E."/>
            <person name="Sugiura K."/>
            <person name="Sultana R."/>
            <person name="Takenaka Y."/>
            <person name="Taki K."/>
            <person name="Tammoja K."/>
            <person name="Tan S.L."/>
            <person name="Tang S."/>
            <person name="Taylor M.S."/>
            <person name="Tegner J."/>
            <person name="Teichmann S.A."/>
            <person name="Ueda H.R."/>
            <person name="van Nimwegen E."/>
            <person name="Verardo R."/>
            <person name="Wei C.L."/>
            <person name="Yagi K."/>
            <person name="Yamanishi H."/>
            <person name="Zabarovsky E."/>
            <person name="Zhu S."/>
            <person name="Zimmer A."/>
            <person name="Hide W."/>
            <person name="Bult C."/>
            <person name="Grimmond S.M."/>
            <person name="Teasdale R.D."/>
            <person name="Liu E.T."/>
            <person name="Brusic V."/>
            <person name="Quackenbush J."/>
            <person name="Wahlestedt C."/>
            <person name="Mattick J.S."/>
            <person name="Hume D.A."/>
            <person name="Kai C."/>
            <person name="Sasaki D."/>
            <person name="Tomaru Y."/>
            <person name="Fukuda S."/>
            <person name="Kanamori-Katayama M."/>
            <person name="Suzuki M."/>
            <person name="Aoki J."/>
            <person name="Arakawa T."/>
            <person name="Iida J."/>
            <person name="Imamura K."/>
            <person name="Itoh M."/>
            <person name="Kato T."/>
            <person name="Kawaji H."/>
            <person name="Kawagashira N."/>
            <person name="Kawashima T."/>
            <person name="Kojima M."/>
            <person name="Kondo S."/>
            <person name="Konno H."/>
            <person name="Nakano K."/>
            <person name="Ninomiya N."/>
            <person name="Nishio T."/>
            <person name="Okada M."/>
            <person name="Plessy C."/>
            <person name="Shibata K."/>
            <person name="Shiraki T."/>
            <person name="Suzuki S."/>
            <person name="Tagami M."/>
            <person name="Waki K."/>
            <person name="Watahiki A."/>
            <person name="Okamura-Oho Y."/>
            <person name="Suzuki H."/>
            <person name="Kawai J."/>
            <person name="Hayashizaki Y."/>
        </authorList>
    </citation>
    <scope>NUCLEOTIDE SEQUENCE [LARGE SCALE MRNA]</scope>
    <source>
        <strain>C57BL/6J</strain>
        <tissue>Brain cortex</tissue>
        <tissue>Placenta</tissue>
    </source>
</reference>
<reference key="3">
    <citation type="journal article" date="2004" name="Genome Res.">
        <title>The status, quality, and expansion of the NIH full-length cDNA project: the Mammalian Gene Collection (MGC).</title>
        <authorList>
            <consortium name="The MGC Project Team"/>
        </authorList>
    </citation>
    <scope>NUCLEOTIDE SEQUENCE [LARGE SCALE MRNA]</scope>
    <source>
        <tissue>Liver</tissue>
    </source>
</reference>
<reference key="4">
    <citation type="journal article" date="2010" name="Cell">
        <title>A tissue-specific atlas of mouse protein phosphorylation and expression.</title>
        <authorList>
            <person name="Huttlin E.L."/>
            <person name="Jedrychowski M.P."/>
            <person name="Elias J.E."/>
            <person name="Goswami T."/>
            <person name="Rad R."/>
            <person name="Beausoleil S.A."/>
            <person name="Villen J."/>
            <person name="Haas W."/>
            <person name="Sowa M.E."/>
            <person name="Gygi S.P."/>
        </authorList>
    </citation>
    <scope>IDENTIFICATION BY MASS SPECTROMETRY [LARGE SCALE ANALYSIS]</scope>
    <source>
        <tissue>Brown adipose tissue</tissue>
        <tissue>Heart</tissue>
        <tissue>Liver</tissue>
        <tissue>Pancreas</tissue>
        <tissue>Spleen</tissue>
    </source>
</reference>
<feature type="chain" id="PRO_0000121709" description="Mitochondrial tRNA-specific 2-thiouridylase 1">
    <location>
        <begin position="1"/>
        <end position="417"/>
    </location>
</feature>
<feature type="region of interest" description="Interaction with target base in tRNA" evidence="1">
    <location>
        <begin position="96"/>
        <end position="98"/>
    </location>
</feature>
<feature type="region of interest" description="Interaction with tRNA" evidence="1">
    <location>
        <begin position="171"/>
        <end position="173"/>
    </location>
</feature>
<feature type="region of interest" description="Interaction with tRNA" evidence="1">
    <location>
        <begin position="334"/>
        <end position="335"/>
    </location>
</feature>
<feature type="region of interest" description="Disordered" evidence="4">
    <location>
        <begin position="397"/>
        <end position="417"/>
    </location>
</feature>
<feature type="compositionally biased region" description="Polar residues" evidence="4">
    <location>
        <begin position="407"/>
        <end position="417"/>
    </location>
</feature>
<feature type="active site" description="Nucleophile" evidence="1">
    <location>
        <position position="101"/>
    </location>
</feature>
<feature type="active site" description="Cysteine persulfide intermediate" evidence="1">
    <location>
        <position position="222"/>
    </location>
</feature>
<feature type="binding site" evidence="1">
    <location>
        <begin position="10"/>
        <end position="17"/>
    </location>
    <ligand>
        <name>ATP</name>
        <dbReference type="ChEBI" id="CHEBI:30616"/>
    </ligand>
</feature>
<feature type="binding site" evidence="1">
    <location>
        <position position="36"/>
    </location>
    <ligand>
        <name>ATP</name>
        <dbReference type="ChEBI" id="CHEBI:30616"/>
    </ligand>
</feature>
<feature type="binding site" evidence="1">
    <location>
        <position position="126"/>
    </location>
    <ligand>
        <name>ATP</name>
        <dbReference type="ChEBI" id="CHEBI:30616"/>
    </ligand>
</feature>
<feature type="site" description="Interaction with tRNA" evidence="1">
    <location>
        <position position="127"/>
    </location>
</feature>
<feature type="site" description="Interaction with tRNA" evidence="1">
    <location>
        <position position="267"/>
    </location>
</feature>
<feature type="site" description="Interaction with tRNA" evidence="1">
    <location>
        <position position="367"/>
    </location>
</feature>
<feature type="disulfide bond" evidence="1">
    <location>
        <begin position="101"/>
        <end position="222"/>
    </location>
</feature>
<name>MTU1_MOUSE</name>
<protein>
    <recommendedName>
        <fullName>Mitochondrial tRNA-specific 2-thiouridylase 1</fullName>
        <ecNumber evidence="3">2.8.1.14</ecNumber>
    </recommendedName>
</protein>
<proteinExistence type="evidence at protein level"/>